<name>RUVB_ERWT9</name>
<feature type="chain" id="PRO_1000089643" description="Holliday junction branch migration complex subunit RuvB">
    <location>
        <begin position="1"/>
        <end position="334"/>
    </location>
</feature>
<feature type="region of interest" description="Large ATPase domain (RuvB-L)" evidence="1">
    <location>
        <begin position="4"/>
        <end position="184"/>
    </location>
</feature>
<feature type="region of interest" description="Small ATPAse domain (RuvB-S)" evidence="1">
    <location>
        <begin position="185"/>
        <end position="255"/>
    </location>
</feature>
<feature type="region of interest" description="Head domain (RuvB-H)" evidence="1">
    <location>
        <begin position="258"/>
        <end position="334"/>
    </location>
</feature>
<feature type="binding site" evidence="1">
    <location>
        <position position="23"/>
    </location>
    <ligand>
        <name>ATP</name>
        <dbReference type="ChEBI" id="CHEBI:30616"/>
    </ligand>
</feature>
<feature type="binding site" evidence="1">
    <location>
        <position position="24"/>
    </location>
    <ligand>
        <name>ATP</name>
        <dbReference type="ChEBI" id="CHEBI:30616"/>
    </ligand>
</feature>
<feature type="binding site" evidence="1">
    <location>
        <position position="65"/>
    </location>
    <ligand>
        <name>ATP</name>
        <dbReference type="ChEBI" id="CHEBI:30616"/>
    </ligand>
</feature>
<feature type="binding site" evidence="1">
    <location>
        <position position="68"/>
    </location>
    <ligand>
        <name>ATP</name>
        <dbReference type="ChEBI" id="CHEBI:30616"/>
    </ligand>
</feature>
<feature type="binding site" evidence="1">
    <location>
        <position position="69"/>
    </location>
    <ligand>
        <name>ATP</name>
        <dbReference type="ChEBI" id="CHEBI:30616"/>
    </ligand>
</feature>
<feature type="binding site" evidence="1">
    <location>
        <position position="69"/>
    </location>
    <ligand>
        <name>Mg(2+)</name>
        <dbReference type="ChEBI" id="CHEBI:18420"/>
    </ligand>
</feature>
<feature type="binding site" evidence="1">
    <location>
        <position position="70"/>
    </location>
    <ligand>
        <name>ATP</name>
        <dbReference type="ChEBI" id="CHEBI:30616"/>
    </ligand>
</feature>
<feature type="binding site" evidence="1">
    <location>
        <begin position="131"/>
        <end position="133"/>
    </location>
    <ligand>
        <name>ATP</name>
        <dbReference type="ChEBI" id="CHEBI:30616"/>
    </ligand>
</feature>
<feature type="binding site" evidence="1">
    <location>
        <position position="174"/>
    </location>
    <ligand>
        <name>ATP</name>
        <dbReference type="ChEBI" id="CHEBI:30616"/>
    </ligand>
</feature>
<feature type="binding site" evidence="1">
    <location>
        <position position="184"/>
    </location>
    <ligand>
        <name>ATP</name>
        <dbReference type="ChEBI" id="CHEBI:30616"/>
    </ligand>
</feature>
<feature type="binding site" evidence="1">
    <location>
        <position position="221"/>
    </location>
    <ligand>
        <name>ATP</name>
        <dbReference type="ChEBI" id="CHEBI:30616"/>
    </ligand>
</feature>
<feature type="binding site" evidence="1">
    <location>
        <position position="294"/>
    </location>
    <ligand>
        <name>DNA</name>
        <dbReference type="ChEBI" id="CHEBI:16991"/>
    </ligand>
</feature>
<feature type="binding site" evidence="1">
    <location>
        <position position="313"/>
    </location>
    <ligand>
        <name>DNA</name>
        <dbReference type="ChEBI" id="CHEBI:16991"/>
    </ligand>
</feature>
<feature type="binding site" evidence="1">
    <location>
        <position position="318"/>
    </location>
    <ligand>
        <name>DNA</name>
        <dbReference type="ChEBI" id="CHEBI:16991"/>
    </ligand>
</feature>
<comment type="function">
    <text evidence="1">The RuvA-RuvB-RuvC complex processes Holliday junction (HJ) DNA during genetic recombination and DNA repair, while the RuvA-RuvB complex plays an important role in the rescue of blocked DNA replication forks via replication fork reversal (RFR). RuvA specifically binds to HJ cruciform DNA, conferring on it an open structure. The RuvB hexamer acts as an ATP-dependent pump, pulling dsDNA into and through the RuvAB complex. RuvB forms 2 homohexamers on either side of HJ DNA bound by 1 or 2 RuvA tetramers; 4 subunits per hexamer contact DNA at a time. Coordinated motions by a converter formed by DNA-disengaged RuvB subunits stimulates ATP hydrolysis and nucleotide exchange. Immobilization of the converter enables RuvB to convert the ATP-contained energy into a lever motion, pulling 2 nucleotides of DNA out of the RuvA tetramer per ATP hydrolyzed, thus driving DNA branch migration. The RuvB motors rotate together with the DNA substrate, which together with the progressing nucleotide cycle form the mechanistic basis for DNA recombination by continuous HJ branch migration. Branch migration allows RuvC to scan DNA until it finds its consensus sequence, where it cleaves and resolves cruciform DNA.</text>
</comment>
<comment type="catalytic activity">
    <reaction evidence="1">
        <text>ATP + H2O = ADP + phosphate + H(+)</text>
        <dbReference type="Rhea" id="RHEA:13065"/>
        <dbReference type="ChEBI" id="CHEBI:15377"/>
        <dbReference type="ChEBI" id="CHEBI:15378"/>
        <dbReference type="ChEBI" id="CHEBI:30616"/>
        <dbReference type="ChEBI" id="CHEBI:43474"/>
        <dbReference type="ChEBI" id="CHEBI:456216"/>
    </reaction>
</comment>
<comment type="subunit">
    <text evidence="1">Homohexamer. Forms an RuvA(8)-RuvB(12)-Holliday junction (HJ) complex. HJ DNA is sandwiched between 2 RuvA tetramers; dsDNA enters through RuvA and exits via RuvB. An RuvB hexamer assembles on each DNA strand where it exits the tetramer. Each RuvB hexamer is contacted by two RuvA subunits (via domain III) on 2 adjacent RuvB subunits; this complex drives branch migration. In the full resolvosome a probable DNA-RuvA(4)-RuvB(12)-RuvC(2) complex forms which resolves the HJ.</text>
</comment>
<comment type="subcellular location">
    <subcellularLocation>
        <location evidence="1">Cytoplasm</location>
    </subcellularLocation>
</comment>
<comment type="domain">
    <text evidence="1">Has 3 domains, the large (RuvB-L) and small ATPase (RuvB-S) domains and the C-terminal head (RuvB-H) domain. The head domain binds DNA, while the ATPase domains jointly bind ATP, ADP or are empty depending on the state of the subunit in the translocation cycle. During a single DNA translocation step the structure of each domain remains the same, but their relative positions change.</text>
</comment>
<comment type="similarity">
    <text evidence="1">Belongs to the RuvB family.</text>
</comment>
<organism>
    <name type="scientific">Erwinia tasmaniensis (strain DSM 17950 / CFBP 7177 / CIP 109463 / NCPPB 4357 / Et1/99)</name>
    <dbReference type="NCBI Taxonomy" id="465817"/>
    <lineage>
        <taxon>Bacteria</taxon>
        <taxon>Pseudomonadati</taxon>
        <taxon>Pseudomonadota</taxon>
        <taxon>Gammaproteobacteria</taxon>
        <taxon>Enterobacterales</taxon>
        <taxon>Erwiniaceae</taxon>
        <taxon>Erwinia</taxon>
    </lineage>
</organism>
<evidence type="ECO:0000255" key="1">
    <source>
        <dbReference type="HAMAP-Rule" id="MF_00016"/>
    </source>
</evidence>
<dbReference type="EC" id="3.6.4.-" evidence="1"/>
<dbReference type="EMBL" id="CU468135">
    <property type="protein sequence ID" value="CAO96536.1"/>
    <property type="molecule type" value="Genomic_DNA"/>
</dbReference>
<dbReference type="RefSeq" id="WP_012441230.1">
    <property type="nucleotide sequence ID" value="NC_010694.1"/>
</dbReference>
<dbReference type="SMR" id="B2VJ95"/>
<dbReference type="STRING" id="465817.ETA_14900"/>
<dbReference type="KEGG" id="eta:ETA_14900"/>
<dbReference type="eggNOG" id="COG2255">
    <property type="taxonomic scope" value="Bacteria"/>
</dbReference>
<dbReference type="HOGENOM" id="CLU_055599_1_0_6"/>
<dbReference type="OrthoDB" id="9804478at2"/>
<dbReference type="Proteomes" id="UP000001726">
    <property type="component" value="Chromosome"/>
</dbReference>
<dbReference type="GO" id="GO:0005737">
    <property type="term" value="C:cytoplasm"/>
    <property type="evidence" value="ECO:0007669"/>
    <property type="project" value="UniProtKB-SubCell"/>
</dbReference>
<dbReference type="GO" id="GO:0048476">
    <property type="term" value="C:Holliday junction resolvase complex"/>
    <property type="evidence" value="ECO:0007669"/>
    <property type="project" value="UniProtKB-UniRule"/>
</dbReference>
<dbReference type="GO" id="GO:0005524">
    <property type="term" value="F:ATP binding"/>
    <property type="evidence" value="ECO:0007669"/>
    <property type="project" value="UniProtKB-UniRule"/>
</dbReference>
<dbReference type="GO" id="GO:0016887">
    <property type="term" value="F:ATP hydrolysis activity"/>
    <property type="evidence" value="ECO:0007669"/>
    <property type="project" value="InterPro"/>
</dbReference>
<dbReference type="GO" id="GO:0000400">
    <property type="term" value="F:four-way junction DNA binding"/>
    <property type="evidence" value="ECO:0007669"/>
    <property type="project" value="UniProtKB-UniRule"/>
</dbReference>
<dbReference type="GO" id="GO:0009378">
    <property type="term" value="F:four-way junction helicase activity"/>
    <property type="evidence" value="ECO:0007669"/>
    <property type="project" value="InterPro"/>
</dbReference>
<dbReference type="GO" id="GO:0006310">
    <property type="term" value="P:DNA recombination"/>
    <property type="evidence" value="ECO:0007669"/>
    <property type="project" value="UniProtKB-UniRule"/>
</dbReference>
<dbReference type="GO" id="GO:0006281">
    <property type="term" value="P:DNA repair"/>
    <property type="evidence" value="ECO:0007669"/>
    <property type="project" value="UniProtKB-UniRule"/>
</dbReference>
<dbReference type="CDD" id="cd00009">
    <property type="entry name" value="AAA"/>
    <property type="match status" value="1"/>
</dbReference>
<dbReference type="FunFam" id="1.10.10.10:FF:000086">
    <property type="entry name" value="Holliday junction ATP-dependent DNA helicase RuvB"/>
    <property type="match status" value="1"/>
</dbReference>
<dbReference type="FunFam" id="1.10.8.60:FF:000023">
    <property type="entry name" value="Holliday junction ATP-dependent DNA helicase RuvB"/>
    <property type="match status" value="1"/>
</dbReference>
<dbReference type="FunFam" id="3.40.50.300:FF:000073">
    <property type="entry name" value="Holliday junction ATP-dependent DNA helicase RuvB"/>
    <property type="match status" value="1"/>
</dbReference>
<dbReference type="Gene3D" id="1.10.8.60">
    <property type="match status" value="1"/>
</dbReference>
<dbReference type="Gene3D" id="3.40.50.300">
    <property type="entry name" value="P-loop containing nucleotide triphosphate hydrolases"/>
    <property type="match status" value="1"/>
</dbReference>
<dbReference type="Gene3D" id="1.10.10.10">
    <property type="entry name" value="Winged helix-like DNA-binding domain superfamily/Winged helix DNA-binding domain"/>
    <property type="match status" value="1"/>
</dbReference>
<dbReference type="HAMAP" id="MF_00016">
    <property type="entry name" value="DNA_HJ_migration_RuvB"/>
    <property type="match status" value="1"/>
</dbReference>
<dbReference type="InterPro" id="IPR003593">
    <property type="entry name" value="AAA+_ATPase"/>
</dbReference>
<dbReference type="InterPro" id="IPR041445">
    <property type="entry name" value="AAA_lid_4"/>
</dbReference>
<dbReference type="InterPro" id="IPR004605">
    <property type="entry name" value="DNA_helicase_Holl-junc_RuvB"/>
</dbReference>
<dbReference type="InterPro" id="IPR027417">
    <property type="entry name" value="P-loop_NTPase"/>
</dbReference>
<dbReference type="InterPro" id="IPR008824">
    <property type="entry name" value="RuvB-like_N"/>
</dbReference>
<dbReference type="InterPro" id="IPR008823">
    <property type="entry name" value="RuvB_C"/>
</dbReference>
<dbReference type="InterPro" id="IPR036388">
    <property type="entry name" value="WH-like_DNA-bd_sf"/>
</dbReference>
<dbReference type="InterPro" id="IPR036390">
    <property type="entry name" value="WH_DNA-bd_sf"/>
</dbReference>
<dbReference type="NCBIfam" id="NF000868">
    <property type="entry name" value="PRK00080.1"/>
    <property type="match status" value="1"/>
</dbReference>
<dbReference type="NCBIfam" id="TIGR00635">
    <property type="entry name" value="ruvB"/>
    <property type="match status" value="1"/>
</dbReference>
<dbReference type="PANTHER" id="PTHR42848">
    <property type="match status" value="1"/>
</dbReference>
<dbReference type="PANTHER" id="PTHR42848:SF1">
    <property type="entry name" value="HOLLIDAY JUNCTION BRANCH MIGRATION COMPLEX SUBUNIT RUVB"/>
    <property type="match status" value="1"/>
</dbReference>
<dbReference type="Pfam" id="PF17864">
    <property type="entry name" value="AAA_lid_4"/>
    <property type="match status" value="1"/>
</dbReference>
<dbReference type="Pfam" id="PF05491">
    <property type="entry name" value="RuvB_C"/>
    <property type="match status" value="1"/>
</dbReference>
<dbReference type="Pfam" id="PF05496">
    <property type="entry name" value="RuvB_N"/>
    <property type="match status" value="1"/>
</dbReference>
<dbReference type="SMART" id="SM00382">
    <property type="entry name" value="AAA"/>
    <property type="match status" value="1"/>
</dbReference>
<dbReference type="SUPFAM" id="SSF52540">
    <property type="entry name" value="P-loop containing nucleoside triphosphate hydrolases"/>
    <property type="match status" value="1"/>
</dbReference>
<dbReference type="SUPFAM" id="SSF46785">
    <property type="entry name" value="Winged helix' DNA-binding domain"/>
    <property type="match status" value="1"/>
</dbReference>
<keyword id="KW-0067">ATP-binding</keyword>
<keyword id="KW-0963">Cytoplasm</keyword>
<keyword id="KW-0227">DNA damage</keyword>
<keyword id="KW-0233">DNA recombination</keyword>
<keyword id="KW-0234">DNA repair</keyword>
<keyword id="KW-0238">DNA-binding</keyword>
<keyword id="KW-0378">Hydrolase</keyword>
<keyword id="KW-0547">Nucleotide-binding</keyword>
<keyword id="KW-1185">Reference proteome</keyword>
<sequence length="334" mass="36755">MIEADRLVSAGVISEEEVIDRAIRPKMLAEYVGQPVVREQMEIFIKAAMMRGDALDHLLIFGPPGLGKTTLANIVANEMGVNLRTTSGPVLEKAGDLAALLTNLEPHDVLFIDEIHRLSPVVEEVLYPAMEDYQLDIMIGEGPAARSIKLDLPPFTLIGATTRAGSLTSPLRDRFGIVQRLEFYRVEDLQHIVGRSAACLGLPLSDEGALEIARRARGTPRIANRLLRRVRDFAEVRAGGEMSGDVASRALDMLSVDSEGFDYMDRKLLLAIIDKFTGGPVGLDNLAAAIGEERETIEDVLEPYLIQQGFIQRTPRGRMATQHAYKHFGITREG</sequence>
<reference key="1">
    <citation type="journal article" date="2008" name="Environ. Microbiol.">
        <title>The genome of Erwinia tasmaniensis strain Et1/99, a non-pathogenic bacterium in the genus Erwinia.</title>
        <authorList>
            <person name="Kube M."/>
            <person name="Migdoll A.M."/>
            <person name="Mueller I."/>
            <person name="Kuhl H."/>
            <person name="Beck A."/>
            <person name="Reinhardt R."/>
            <person name="Geider K."/>
        </authorList>
    </citation>
    <scope>NUCLEOTIDE SEQUENCE [LARGE SCALE GENOMIC DNA]</scope>
    <source>
        <strain>DSM 17950 / CFBP 7177 / CIP 109463 / NCPPB 4357 / Et1/99</strain>
    </source>
</reference>
<protein>
    <recommendedName>
        <fullName evidence="1">Holliday junction branch migration complex subunit RuvB</fullName>
        <ecNumber evidence="1">3.6.4.-</ecNumber>
    </recommendedName>
</protein>
<accession>B2VJ95</accession>
<proteinExistence type="inferred from homology"/>
<gene>
    <name evidence="1" type="primary">ruvB</name>
    <name type="ordered locus">ETA_14900</name>
</gene>